<evidence type="ECO:0000255" key="1">
    <source>
        <dbReference type="HAMAP-Rule" id="MF_00057"/>
    </source>
</evidence>
<comment type="function">
    <text evidence="1">Activates KDO (a required 8-carbon sugar) for incorporation into bacterial lipopolysaccharide in Gram-negative bacteria.</text>
</comment>
<comment type="catalytic activity">
    <reaction evidence="1">
        <text>3-deoxy-alpha-D-manno-oct-2-ulosonate + CTP = CMP-3-deoxy-beta-D-manno-octulosonate + diphosphate</text>
        <dbReference type="Rhea" id="RHEA:23448"/>
        <dbReference type="ChEBI" id="CHEBI:33019"/>
        <dbReference type="ChEBI" id="CHEBI:37563"/>
        <dbReference type="ChEBI" id="CHEBI:85986"/>
        <dbReference type="ChEBI" id="CHEBI:85987"/>
        <dbReference type="EC" id="2.7.7.38"/>
    </reaction>
</comment>
<comment type="pathway">
    <text evidence="1">Nucleotide-sugar biosynthesis; CMP-3-deoxy-D-manno-octulosonate biosynthesis; CMP-3-deoxy-D-manno-octulosonate from 3-deoxy-D-manno-octulosonate and CTP: step 1/1.</text>
</comment>
<comment type="subcellular location">
    <subcellularLocation>
        <location evidence="1">Cytoplasm</location>
    </subcellularLocation>
</comment>
<comment type="similarity">
    <text evidence="1">Belongs to the KdsB family.</text>
</comment>
<organism>
    <name type="scientific">Lawsonia intracellularis (strain PHE/MN1-00)</name>
    <dbReference type="NCBI Taxonomy" id="363253"/>
    <lineage>
        <taxon>Bacteria</taxon>
        <taxon>Pseudomonadati</taxon>
        <taxon>Thermodesulfobacteriota</taxon>
        <taxon>Desulfovibrionia</taxon>
        <taxon>Desulfovibrionales</taxon>
        <taxon>Desulfovibrionaceae</taxon>
        <taxon>Lawsonia</taxon>
    </lineage>
</organism>
<proteinExistence type="inferred from homology"/>
<name>KDSB_LAWIP</name>
<reference key="1">
    <citation type="submission" date="2005-11" db="EMBL/GenBank/DDBJ databases">
        <title>The complete genome sequence of Lawsonia intracellularis: the causative agent of proliferative enteropathy.</title>
        <authorList>
            <person name="Kaur K."/>
            <person name="Zhang Q."/>
            <person name="Beckler D."/>
            <person name="Munir S."/>
            <person name="Li L."/>
            <person name="Kinsley K."/>
            <person name="Herron L."/>
            <person name="Peterson A."/>
            <person name="May B."/>
            <person name="Singh S."/>
            <person name="Gebhart C."/>
            <person name="Kapur V."/>
        </authorList>
    </citation>
    <scope>NUCLEOTIDE SEQUENCE [LARGE SCALE GENOMIC DNA]</scope>
    <source>
        <strain>PHE/MN1-00</strain>
    </source>
</reference>
<sequence>MSQISPLYYGIIPARYGSSRLPGKPLIDIWGKPMFWYVYQNAVESNIFRSVVLATDSEEIAESAHQLSIPYVMTSVEHISGTDRVYEAAIKMNIEPDSVVVNIQGDEPLVKPEAIQQLVEPFIDVSIQVTTLSTRITANQAMLPHQVKVVVSSNGDALYFSRAAIPYLRDNDTDGYYLGHIGLYAFRMHTLDKFVHLPPSQLEQFEKLEQLRLLENNIPIRVVNTNHTSQGVDTVEDLEIVQGLLAQRMEAVSR</sequence>
<protein>
    <recommendedName>
        <fullName evidence="1">3-deoxy-manno-octulosonate cytidylyltransferase</fullName>
        <ecNumber evidence="1">2.7.7.38</ecNumber>
    </recommendedName>
    <alternativeName>
        <fullName evidence="1">CMP-2-keto-3-deoxyoctulosonic acid synthase</fullName>
        <shortName evidence="1">CKS</shortName>
        <shortName evidence="1">CMP-KDO synthase</shortName>
    </alternativeName>
</protein>
<accession>Q1MPN4</accession>
<feature type="chain" id="PRO_0000370078" description="3-deoxy-manno-octulosonate cytidylyltransferase">
    <location>
        <begin position="1"/>
        <end position="254"/>
    </location>
</feature>
<gene>
    <name evidence="1" type="primary">kdsB</name>
    <name type="ordered locus">LI0989</name>
</gene>
<dbReference type="EC" id="2.7.7.38" evidence="1"/>
<dbReference type="EMBL" id="AM180252">
    <property type="protein sequence ID" value="CAJ55043.1"/>
    <property type="molecule type" value="Genomic_DNA"/>
</dbReference>
<dbReference type="RefSeq" id="WP_011527072.1">
    <property type="nucleotide sequence ID" value="NC_008011.1"/>
</dbReference>
<dbReference type="SMR" id="Q1MPN4"/>
<dbReference type="STRING" id="363253.LI0989"/>
<dbReference type="KEGG" id="lip:LI0989"/>
<dbReference type="eggNOG" id="COG1212">
    <property type="taxonomic scope" value="Bacteria"/>
</dbReference>
<dbReference type="HOGENOM" id="CLU_065038_0_1_7"/>
<dbReference type="OrthoDB" id="9815559at2"/>
<dbReference type="UniPathway" id="UPA00358">
    <property type="reaction ID" value="UER00476"/>
</dbReference>
<dbReference type="Proteomes" id="UP000002430">
    <property type="component" value="Chromosome"/>
</dbReference>
<dbReference type="GO" id="GO:0005829">
    <property type="term" value="C:cytosol"/>
    <property type="evidence" value="ECO:0007669"/>
    <property type="project" value="TreeGrafter"/>
</dbReference>
<dbReference type="GO" id="GO:0008690">
    <property type="term" value="F:3-deoxy-manno-octulosonate cytidylyltransferase activity"/>
    <property type="evidence" value="ECO:0007669"/>
    <property type="project" value="UniProtKB-UniRule"/>
</dbReference>
<dbReference type="GO" id="GO:0033468">
    <property type="term" value="P:CMP-keto-3-deoxy-D-manno-octulosonic acid biosynthetic process"/>
    <property type="evidence" value="ECO:0007669"/>
    <property type="project" value="UniProtKB-UniRule"/>
</dbReference>
<dbReference type="GO" id="GO:0009103">
    <property type="term" value="P:lipopolysaccharide biosynthetic process"/>
    <property type="evidence" value="ECO:0007669"/>
    <property type="project" value="UniProtKB-UniRule"/>
</dbReference>
<dbReference type="CDD" id="cd02517">
    <property type="entry name" value="CMP-KDO-Synthetase"/>
    <property type="match status" value="1"/>
</dbReference>
<dbReference type="FunFam" id="3.90.550.10:FF:000011">
    <property type="entry name" value="3-deoxy-manno-octulosonate cytidylyltransferase"/>
    <property type="match status" value="1"/>
</dbReference>
<dbReference type="Gene3D" id="3.90.550.10">
    <property type="entry name" value="Spore Coat Polysaccharide Biosynthesis Protein SpsA, Chain A"/>
    <property type="match status" value="1"/>
</dbReference>
<dbReference type="HAMAP" id="MF_00057">
    <property type="entry name" value="KdsB"/>
    <property type="match status" value="1"/>
</dbReference>
<dbReference type="InterPro" id="IPR003329">
    <property type="entry name" value="Cytidylyl_trans"/>
</dbReference>
<dbReference type="InterPro" id="IPR004528">
    <property type="entry name" value="KdsB"/>
</dbReference>
<dbReference type="InterPro" id="IPR029044">
    <property type="entry name" value="Nucleotide-diphossugar_trans"/>
</dbReference>
<dbReference type="NCBIfam" id="TIGR00466">
    <property type="entry name" value="kdsB"/>
    <property type="match status" value="1"/>
</dbReference>
<dbReference type="NCBIfam" id="NF003950">
    <property type="entry name" value="PRK05450.1-3"/>
    <property type="match status" value="1"/>
</dbReference>
<dbReference type="NCBIfam" id="NF003952">
    <property type="entry name" value="PRK05450.1-5"/>
    <property type="match status" value="1"/>
</dbReference>
<dbReference type="NCBIfam" id="NF009905">
    <property type="entry name" value="PRK13368.1"/>
    <property type="match status" value="1"/>
</dbReference>
<dbReference type="PANTHER" id="PTHR42866">
    <property type="entry name" value="3-DEOXY-MANNO-OCTULOSONATE CYTIDYLYLTRANSFERASE"/>
    <property type="match status" value="1"/>
</dbReference>
<dbReference type="PANTHER" id="PTHR42866:SF2">
    <property type="entry name" value="3-DEOXY-MANNO-OCTULOSONATE CYTIDYLYLTRANSFERASE, MITOCHONDRIAL"/>
    <property type="match status" value="1"/>
</dbReference>
<dbReference type="Pfam" id="PF02348">
    <property type="entry name" value="CTP_transf_3"/>
    <property type="match status" value="1"/>
</dbReference>
<dbReference type="SUPFAM" id="SSF53448">
    <property type="entry name" value="Nucleotide-diphospho-sugar transferases"/>
    <property type="match status" value="1"/>
</dbReference>
<keyword id="KW-0963">Cytoplasm</keyword>
<keyword id="KW-0448">Lipopolysaccharide biosynthesis</keyword>
<keyword id="KW-0548">Nucleotidyltransferase</keyword>
<keyword id="KW-1185">Reference proteome</keyword>
<keyword id="KW-0808">Transferase</keyword>